<comment type="function">
    <text evidence="1">The RuvA-RuvB-RuvC complex processes Holliday junction (HJ) DNA during genetic recombination and DNA repair. Endonuclease that resolves HJ intermediates. Cleaves cruciform DNA by making single-stranded nicks across the HJ at symmetrical positions within the homologous arms, yielding a 5'-phosphate and a 3'-hydroxyl group; requires a central core of homology in the junction. The consensus cleavage sequence is 5'-(A/T)TT(C/G)-3'. Cleavage occurs on the 3'-side of the TT dinucleotide at the point of strand exchange. HJ branch migration catalyzed by RuvA-RuvB allows RuvC to scan DNA until it finds its consensus sequence, where it cleaves and resolves the cruciform DNA.</text>
</comment>
<comment type="catalytic activity">
    <reaction evidence="1">
        <text>Endonucleolytic cleavage at a junction such as a reciprocal single-stranded crossover between two homologous DNA duplexes (Holliday junction).</text>
        <dbReference type="EC" id="3.1.21.10"/>
    </reaction>
</comment>
<comment type="cofactor">
    <cofactor evidence="1">
        <name>Mg(2+)</name>
        <dbReference type="ChEBI" id="CHEBI:18420"/>
    </cofactor>
    <text evidence="1">Binds 2 Mg(2+) ion per subunit.</text>
</comment>
<comment type="subunit">
    <text evidence="1">Homodimer which binds Holliday junction (HJ) DNA. The HJ becomes 2-fold symmetrical on binding to RuvC with unstacked arms; it has a different conformation from HJ DNA in complex with RuvA. In the full resolvosome a probable DNA-RuvA(4)-RuvB(12)-RuvC(2) complex forms which resolves the HJ.</text>
</comment>
<comment type="subcellular location">
    <subcellularLocation>
        <location evidence="1">Cytoplasm</location>
    </subcellularLocation>
</comment>
<comment type="similarity">
    <text evidence="1">Belongs to the RuvC family.</text>
</comment>
<protein>
    <recommendedName>
        <fullName evidence="1">Crossover junction endodeoxyribonuclease RuvC</fullName>
        <ecNumber evidence="1">3.1.21.10</ecNumber>
    </recommendedName>
    <alternativeName>
        <fullName evidence="1">Holliday junction nuclease RuvC</fullName>
    </alternativeName>
    <alternativeName>
        <fullName evidence="1">Holliday junction resolvase RuvC</fullName>
    </alternativeName>
</protein>
<feature type="chain" id="PRO_0000225132" description="Crossover junction endodeoxyribonuclease RuvC">
    <location>
        <begin position="1"/>
        <end position="192"/>
    </location>
</feature>
<feature type="region of interest" description="Disordered" evidence="2">
    <location>
        <begin position="158"/>
        <end position="192"/>
    </location>
</feature>
<feature type="compositionally biased region" description="Polar residues" evidence="2">
    <location>
        <begin position="182"/>
        <end position="192"/>
    </location>
</feature>
<feature type="active site" evidence="1">
    <location>
        <position position="7"/>
    </location>
</feature>
<feature type="active site" evidence="1">
    <location>
        <position position="67"/>
    </location>
</feature>
<feature type="active site" evidence="1">
    <location>
        <position position="140"/>
    </location>
</feature>
<feature type="binding site" evidence="1">
    <location>
        <position position="7"/>
    </location>
    <ligand>
        <name>Mg(2+)</name>
        <dbReference type="ChEBI" id="CHEBI:18420"/>
        <label>1</label>
    </ligand>
</feature>
<feature type="binding site" evidence="1">
    <location>
        <position position="67"/>
    </location>
    <ligand>
        <name>Mg(2+)</name>
        <dbReference type="ChEBI" id="CHEBI:18420"/>
        <label>2</label>
    </ligand>
</feature>
<feature type="binding site" evidence="1">
    <location>
        <position position="140"/>
    </location>
    <ligand>
        <name>Mg(2+)</name>
        <dbReference type="ChEBI" id="CHEBI:18420"/>
        <label>1</label>
    </ligand>
</feature>
<proteinExistence type="inferred from homology"/>
<reference key="1">
    <citation type="submission" date="2005-08" db="EMBL/GenBank/DDBJ databases">
        <title>Complete sequence of Chlorobium chlorochromatii CaD3.</title>
        <authorList>
            <consortium name="US DOE Joint Genome Institute"/>
            <person name="Copeland A."/>
            <person name="Lucas S."/>
            <person name="Lapidus A."/>
            <person name="Barry K."/>
            <person name="Detter J.C."/>
            <person name="Glavina T."/>
            <person name="Hammon N."/>
            <person name="Israni S."/>
            <person name="Pitluck S."/>
            <person name="Bryant D."/>
            <person name="Schmutz J."/>
            <person name="Larimer F."/>
            <person name="Land M."/>
            <person name="Kyrpides N."/>
            <person name="Ivanova N."/>
            <person name="Richardson P."/>
        </authorList>
    </citation>
    <scope>NUCLEOTIDE SEQUENCE [LARGE SCALE GENOMIC DNA]</scope>
    <source>
        <strain>CaD3</strain>
    </source>
</reference>
<keyword id="KW-0963">Cytoplasm</keyword>
<keyword id="KW-0227">DNA damage</keyword>
<keyword id="KW-0233">DNA recombination</keyword>
<keyword id="KW-0234">DNA repair</keyword>
<keyword id="KW-0238">DNA-binding</keyword>
<keyword id="KW-0255">Endonuclease</keyword>
<keyword id="KW-0378">Hydrolase</keyword>
<keyword id="KW-0460">Magnesium</keyword>
<keyword id="KW-0479">Metal-binding</keyword>
<keyword id="KW-0540">Nuclease</keyword>
<dbReference type="EC" id="3.1.21.10" evidence="1"/>
<dbReference type="EMBL" id="CP000108">
    <property type="protein sequence ID" value="ABB27442.1"/>
    <property type="molecule type" value="Genomic_DNA"/>
</dbReference>
<dbReference type="SMR" id="Q3AU83"/>
<dbReference type="STRING" id="340177.Cag_0164"/>
<dbReference type="KEGG" id="cch:Cag_0164"/>
<dbReference type="eggNOG" id="COG0817">
    <property type="taxonomic scope" value="Bacteria"/>
</dbReference>
<dbReference type="HOGENOM" id="CLU_091257_3_0_10"/>
<dbReference type="OrthoDB" id="9805499at2"/>
<dbReference type="GO" id="GO:0005737">
    <property type="term" value="C:cytoplasm"/>
    <property type="evidence" value="ECO:0007669"/>
    <property type="project" value="UniProtKB-SubCell"/>
</dbReference>
<dbReference type="GO" id="GO:0048476">
    <property type="term" value="C:Holliday junction resolvase complex"/>
    <property type="evidence" value="ECO:0007669"/>
    <property type="project" value="UniProtKB-UniRule"/>
</dbReference>
<dbReference type="GO" id="GO:0008821">
    <property type="term" value="F:crossover junction DNA endonuclease activity"/>
    <property type="evidence" value="ECO:0007669"/>
    <property type="project" value="UniProtKB-UniRule"/>
</dbReference>
<dbReference type="GO" id="GO:0003677">
    <property type="term" value="F:DNA binding"/>
    <property type="evidence" value="ECO:0007669"/>
    <property type="project" value="UniProtKB-KW"/>
</dbReference>
<dbReference type="GO" id="GO:0000287">
    <property type="term" value="F:magnesium ion binding"/>
    <property type="evidence" value="ECO:0007669"/>
    <property type="project" value="UniProtKB-UniRule"/>
</dbReference>
<dbReference type="GO" id="GO:0006310">
    <property type="term" value="P:DNA recombination"/>
    <property type="evidence" value="ECO:0007669"/>
    <property type="project" value="UniProtKB-UniRule"/>
</dbReference>
<dbReference type="GO" id="GO:0006281">
    <property type="term" value="P:DNA repair"/>
    <property type="evidence" value="ECO:0007669"/>
    <property type="project" value="UniProtKB-UniRule"/>
</dbReference>
<dbReference type="CDD" id="cd16962">
    <property type="entry name" value="RuvC"/>
    <property type="match status" value="1"/>
</dbReference>
<dbReference type="FunFam" id="3.30.420.10:FF:000002">
    <property type="entry name" value="Crossover junction endodeoxyribonuclease RuvC"/>
    <property type="match status" value="1"/>
</dbReference>
<dbReference type="Gene3D" id="3.30.420.10">
    <property type="entry name" value="Ribonuclease H-like superfamily/Ribonuclease H"/>
    <property type="match status" value="1"/>
</dbReference>
<dbReference type="HAMAP" id="MF_00034">
    <property type="entry name" value="RuvC"/>
    <property type="match status" value="1"/>
</dbReference>
<dbReference type="InterPro" id="IPR012337">
    <property type="entry name" value="RNaseH-like_sf"/>
</dbReference>
<dbReference type="InterPro" id="IPR036397">
    <property type="entry name" value="RNaseH_sf"/>
</dbReference>
<dbReference type="InterPro" id="IPR020563">
    <property type="entry name" value="X-over_junc_endoDNase_Mg_BS"/>
</dbReference>
<dbReference type="InterPro" id="IPR002176">
    <property type="entry name" value="X-over_junc_endoDNase_RuvC"/>
</dbReference>
<dbReference type="NCBIfam" id="TIGR00228">
    <property type="entry name" value="ruvC"/>
    <property type="match status" value="1"/>
</dbReference>
<dbReference type="PANTHER" id="PTHR30194">
    <property type="entry name" value="CROSSOVER JUNCTION ENDODEOXYRIBONUCLEASE RUVC"/>
    <property type="match status" value="1"/>
</dbReference>
<dbReference type="PANTHER" id="PTHR30194:SF3">
    <property type="entry name" value="CROSSOVER JUNCTION ENDODEOXYRIBONUCLEASE RUVC"/>
    <property type="match status" value="1"/>
</dbReference>
<dbReference type="Pfam" id="PF02075">
    <property type="entry name" value="RuvC"/>
    <property type="match status" value="1"/>
</dbReference>
<dbReference type="PRINTS" id="PR00696">
    <property type="entry name" value="RSOLVASERUVC"/>
</dbReference>
<dbReference type="SUPFAM" id="SSF53098">
    <property type="entry name" value="Ribonuclease H-like"/>
    <property type="match status" value="1"/>
</dbReference>
<dbReference type="PROSITE" id="PS01321">
    <property type="entry name" value="RUVC"/>
    <property type="match status" value="1"/>
</dbReference>
<organism>
    <name type="scientific">Chlorobium chlorochromatii (strain CaD3)</name>
    <dbReference type="NCBI Taxonomy" id="340177"/>
    <lineage>
        <taxon>Bacteria</taxon>
        <taxon>Pseudomonadati</taxon>
        <taxon>Chlorobiota</taxon>
        <taxon>Chlorobiia</taxon>
        <taxon>Chlorobiales</taxon>
        <taxon>Chlorobiaceae</taxon>
        <taxon>Chlorobium/Pelodictyon group</taxon>
        <taxon>Chlorobium</taxon>
    </lineage>
</organism>
<gene>
    <name evidence="1" type="primary">ruvC</name>
    <name type="ordered locus">Cag_0164</name>
</gene>
<sequence length="192" mass="20788">MIVLGVDPGSLKTGYGVVQHHNGSFSVLAAGVIRLQAAWSHPERIGIICRELEQVIAEFQPERVALETAFLSHNVQAALKLGQVRGAVIGLVVRYALPIYEYAPREVKSAITGKGAATKEQVAFMVSRMLSLHTVPKPHDVTDALGIALCDILRGESRQSGVPPRTNSRRKSGTGGSWEQFVRQSPNVVVRS</sequence>
<accession>Q3AU83</accession>
<name>RUVC_CHLCH</name>
<evidence type="ECO:0000255" key="1">
    <source>
        <dbReference type="HAMAP-Rule" id="MF_00034"/>
    </source>
</evidence>
<evidence type="ECO:0000256" key="2">
    <source>
        <dbReference type="SAM" id="MobiDB-lite"/>
    </source>
</evidence>